<evidence type="ECO:0000255" key="1">
    <source>
        <dbReference type="HAMAP-Rule" id="MF_01636"/>
    </source>
</evidence>
<dbReference type="EC" id="4.1.1.98" evidence="1"/>
<dbReference type="EMBL" id="CP000507">
    <property type="protein sequence ID" value="ABL98636.1"/>
    <property type="molecule type" value="Genomic_DNA"/>
</dbReference>
<dbReference type="RefSeq" id="WP_011758546.1">
    <property type="nucleotide sequence ID" value="NC_008700.1"/>
</dbReference>
<dbReference type="SMR" id="A1S2N0"/>
<dbReference type="STRING" id="326297.Sama_0426"/>
<dbReference type="KEGG" id="saz:Sama_0426"/>
<dbReference type="eggNOG" id="COG0043">
    <property type="taxonomic scope" value="Bacteria"/>
</dbReference>
<dbReference type="HOGENOM" id="CLU_023348_4_1_6"/>
<dbReference type="OrthoDB" id="9809841at2"/>
<dbReference type="UniPathway" id="UPA00232"/>
<dbReference type="Proteomes" id="UP000009175">
    <property type="component" value="Chromosome"/>
</dbReference>
<dbReference type="GO" id="GO:0005829">
    <property type="term" value="C:cytosol"/>
    <property type="evidence" value="ECO:0007669"/>
    <property type="project" value="TreeGrafter"/>
</dbReference>
<dbReference type="GO" id="GO:0005886">
    <property type="term" value="C:plasma membrane"/>
    <property type="evidence" value="ECO:0007669"/>
    <property type="project" value="UniProtKB-SubCell"/>
</dbReference>
<dbReference type="GO" id="GO:0008694">
    <property type="term" value="F:3-octaprenyl-4-hydroxybenzoate carboxy-lyase activity"/>
    <property type="evidence" value="ECO:0007669"/>
    <property type="project" value="UniProtKB-UniRule"/>
</dbReference>
<dbReference type="GO" id="GO:0046872">
    <property type="term" value="F:metal ion binding"/>
    <property type="evidence" value="ECO:0007669"/>
    <property type="project" value="UniProtKB-KW"/>
</dbReference>
<dbReference type="GO" id="GO:0006744">
    <property type="term" value="P:ubiquinone biosynthetic process"/>
    <property type="evidence" value="ECO:0007669"/>
    <property type="project" value="UniProtKB-UniRule"/>
</dbReference>
<dbReference type="FunFam" id="1.20.5.570:FF:000001">
    <property type="entry name" value="3-octaprenyl-4-hydroxybenzoate carboxy-lyase"/>
    <property type="match status" value="1"/>
</dbReference>
<dbReference type="FunFam" id="3.40.1670.10:FF:000001">
    <property type="entry name" value="3-octaprenyl-4-hydroxybenzoate carboxy-lyase"/>
    <property type="match status" value="1"/>
</dbReference>
<dbReference type="Gene3D" id="1.20.5.570">
    <property type="entry name" value="Single helix bin"/>
    <property type="match status" value="1"/>
</dbReference>
<dbReference type="Gene3D" id="3.40.1670.10">
    <property type="entry name" value="UbiD C-terminal domain-like"/>
    <property type="match status" value="1"/>
</dbReference>
<dbReference type="HAMAP" id="MF_01636">
    <property type="entry name" value="UbiD"/>
    <property type="match status" value="1"/>
</dbReference>
<dbReference type="InterPro" id="IPR002830">
    <property type="entry name" value="UbiD"/>
</dbReference>
<dbReference type="InterPro" id="IPR049381">
    <property type="entry name" value="UbiD-like_C"/>
</dbReference>
<dbReference type="InterPro" id="IPR049383">
    <property type="entry name" value="UbiD-like_N"/>
</dbReference>
<dbReference type="InterPro" id="IPR023677">
    <property type="entry name" value="UbiD_bacteria"/>
</dbReference>
<dbReference type="InterPro" id="IPR048304">
    <property type="entry name" value="UbiD_Rift_dom"/>
</dbReference>
<dbReference type="NCBIfam" id="NF008175">
    <property type="entry name" value="PRK10922.1"/>
    <property type="match status" value="1"/>
</dbReference>
<dbReference type="NCBIfam" id="TIGR00148">
    <property type="entry name" value="UbiD family decarboxylase"/>
    <property type="match status" value="1"/>
</dbReference>
<dbReference type="PANTHER" id="PTHR30108">
    <property type="entry name" value="3-OCTAPRENYL-4-HYDROXYBENZOATE CARBOXY-LYASE-RELATED"/>
    <property type="match status" value="1"/>
</dbReference>
<dbReference type="PANTHER" id="PTHR30108:SF17">
    <property type="entry name" value="FERULIC ACID DECARBOXYLASE 1"/>
    <property type="match status" value="1"/>
</dbReference>
<dbReference type="Pfam" id="PF01977">
    <property type="entry name" value="UbiD"/>
    <property type="match status" value="1"/>
</dbReference>
<dbReference type="Pfam" id="PF20696">
    <property type="entry name" value="UbiD_C"/>
    <property type="match status" value="1"/>
</dbReference>
<dbReference type="Pfam" id="PF20695">
    <property type="entry name" value="UbiD_N"/>
    <property type="match status" value="1"/>
</dbReference>
<dbReference type="SUPFAM" id="SSF50475">
    <property type="entry name" value="FMN-binding split barrel"/>
    <property type="match status" value="1"/>
</dbReference>
<dbReference type="SUPFAM" id="SSF143968">
    <property type="entry name" value="UbiD C-terminal domain-like"/>
    <property type="match status" value="1"/>
</dbReference>
<organism>
    <name type="scientific">Shewanella amazonensis (strain ATCC BAA-1098 / SB2B)</name>
    <dbReference type="NCBI Taxonomy" id="326297"/>
    <lineage>
        <taxon>Bacteria</taxon>
        <taxon>Pseudomonadati</taxon>
        <taxon>Pseudomonadota</taxon>
        <taxon>Gammaproteobacteria</taxon>
        <taxon>Alteromonadales</taxon>
        <taxon>Shewanellaceae</taxon>
        <taxon>Shewanella</taxon>
    </lineage>
</organism>
<sequence>MSFKDLRSFISHLEECGELKRVSYPVDPYLEMTEIADRVLRAGGPALLFEQPKGHSMPVLANLFGTPKRVAMALGKEDPLALRDVGELLAFLKEPEPPRGFKDAIAKIPMFKQALNMPPKTVSRAPCQEVVMTGDDVDLTKLPIQHCWPGDVAPLVTWGLTITKGPRQKRQNLGIYRQQLLGKNKLIMRWLSHRGGALDFRDFQEKHPGENYPVVVALGSDPVTILGAVTPVPDSMSEYAFAGLLRGERTEVVKALSCDLEVPATSEIILEGYIAPGEMAEEGPYGDHTGYYNETDSFPVFTVTHISHRKDAIYHSTYTGRPPDEPAMLGVALNEVFVPILRKQYPEIVDFYLPPEGCSYRMAVISIRKQYPGHAKRVMMGAWSFLRQFMYTKFIVVVDEDVNCRDWQDVIWAITTRMDPTRDTVMIDNTPIDYLDFASPVAGLGSKMGLDATNKWEGETNREWGTPIVMDEAVKRRVDDIWDELGIEQSPTL</sequence>
<proteinExistence type="inferred from homology"/>
<gene>
    <name evidence="1" type="primary">ubiD</name>
    <name type="ordered locus">Sama_0426</name>
</gene>
<accession>A1S2N0</accession>
<keyword id="KW-1003">Cell membrane</keyword>
<keyword id="KW-0210">Decarboxylase</keyword>
<keyword id="KW-0285">Flavoprotein</keyword>
<keyword id="KW-0288">FMN</keyword>
<keyword id="KW-0456">Lyase</keyword>
<keyword id="KW-0464">Manganese</keyword>
<keyword id="KW-0472">Membrane</keyword>
<keyword id="KW-0479">Metal-binding</keyword>
<keyword id="KW-1185">Reference proteome</keyword>
<keyword id="KW-0831">Ubiquinone biosynthesis</keyword>
<comment type="function">
    <text evidence="1">Catalyzes the decarboxylation of 3-octaprenyl-4-hydroxy benzoate to 2-octaprenylphenol, an intermediate step in ubiquinone biosynthesis.</text>
</comment>
<comment type="catalytic activity">
    <reaction evidence="1">
        <text>a 4-hydroxy-3-(all-trans-polyprenyl)benzoate + H(+) = a 2-(all-trans-polyprenyl)phenol + CO2</text>
        <dbReference type="Rhea" id="RHEA:41680"/>
        <dbReference type="Rhea" id="RHEA-COMP:9514"/>
        <dbReference type="Rhea" id="RHEA-COMP:9516"/>
        <dbReference type="ChEBI" id="CHEBI:1269"/>
        <dbReference type="ChEBI" id="CHEBI:15378"/>
        <dbReference type="ChEBI" id="CHEBI:16526"/>
        <dbReference type="ChEBI" id="CHEBI:78396"/>
        <dbReference type="EC" id="4.1.1.98"/>
    </reaction>
</comment>
<comment type="cofactor">
    <cofactor evidence="1">
        <name>prenylated FMN</name>
        <dbReference type="ChEBI" id="CHEBI:87746"/>
    </cofactor>
    <text evidence="1">Binds 1 prenylated FMN per subunit.</text>
</comment>
<comment type="cofactor">
    <cofactor evidence="1">
        <name>Mn(2+)</name>
        <dbReference type="ChEBI" id="CHEBI:29035"/>
    </cofactor>
</comment>
<comment type="pathway">
    <text evidence="1">Cofactor biosynthesis; ubiquinone biosynthesis.</text>
</comment>
<comment type="subunit">
    <text evidence="1">Homohexamer.</text>
</comment>
<comment type="subcellular location">
    <subcellularLocation>
        <location evidence="1">Cell membrane</location>
        <topology evidence="1">Peripheral membrane protein</topology>
    </subcellularLocation>
</comment>
<comment type="similarity">
    <text evidence="1">Belongs to the UbiD family.</text>
</comment>
<name>UBID_SHEAM</name>
<protein>
    <recommendedName>
        <fullName evidence="1">3-octaprenyl-4-hydroxybenzoate carboxy-lyase</fullName>
        <ecNumber evidence="1">4.1.1.98</ecNumber>
    </recommendedName>
    <alternativeName>
        <fullName evidence="1">Polyprenyl p-hydroxybenzoate decarboxylase</fullName>
    </alternativeName>
</protein>
<feature type="chain" id="PRO_1000069859" description="3-octaprenyl-4-hydroxybenzoate carboxy-lyase">
    <location>
        <begin position="1"/>
        <end position="493"/>
    </location>
</feature>
<feature type="active site" description="Proton donor" evidence="1">
    <location>
        <position position="287"/>
    </location>
</feature>
<feature type="binding site" evidence="1">
    <location>
        <position position="172"/>
    </location>
    <ligand>
        <name>Mn(2+)</name>
        <dbReference type="ChEBI" id="CHEBI:29035"/>
    </ligand>
</feature>
<feature type="binding site" evidence="1">
    <location>
        <begin position="175"/>
        <end position="177"/>
    </location>
    <ligand>
        <name>prenylated FMN</name>
        <dbReference type="ChEBI" id="CHEBI:87746"/>
    </ligand>
</feature>
<feature type="binding site" evidence="1">
    <location>
        <begin position="189"/>
        <end position="191"/>
    </location>
    <ligand>
        <name>prenylated FMN</name>
        <dbReference type="ChEBI" id="CHEBI:87746"/>
    </ligand>
</feature>
<feature type="binding site" evidence="1">
    <location>
        <begin position="194"/>
        <end position="195"/>
    </location>
    <ligand>
        <name>prenylated FMN</name>
        <dbReference type="ChEBI" id="CHEBI:87746"/>
    </ligand>
</feature>
<feature type="binding site" evidence="1">
    <location>
        <position position="238"/>
    </location>
    <ligand>
        <name>Mn(2+)</name>
        <dbReference type="ChEBI" id="CHEBI:29035"/>
    </ligand>
</feature>
<reference key="1">
    <citation type="submission" date="2006-12" db="EMBL/GenBank/DDBJ databases">
        <title>Complete sequence of Shewanella amazonensis SB2B.</title>
        <authorList>
            <consortium name="US DOE Joint Genome Institute"/>
            <person name="Copeland A."/>
            <person name="Lucas S."/>
            <person name="Lapidus A."/>
            <person name="Barry K."/>
            <person name="Detter J.C."/>
            <person name="Glavina del Rio T."/>
            <person name="Hammon N."/>
            <person name="Israni S."/>
            <person name="Dalin E."/>
            <person name="Tice H."/>
            <person name="Pitluck S."/>
            <person name="Munk A.C."/>
            <person name="Brettin T."/>
            <person name="Bruce D."/>
            <person name="Han C."/>
            <person name="Tapia R."/>
            <person name="Gilna P."/>
            <person name="Schmutz J."/>
            <person name="Larimer F."/>
            <person name="Land M."/>
            <person name="Hauser L."/>
            <person name="Kyrpides N."/>
            <person name="Mikhailova N."/>
            <person name="Fredrickson J."/>
            <person name="Richardson P."/>
        </authorList>
    </citation>
    <scope>NUCLEOTIDE SEQUENCE [LARGE SCALE GENOMIC DNA]</scope>
    <source>
        <strain>ATCC BAA-1098 / SB2B</strain>
    </source>
</reference>